<keyword id="KW-0106">Calcium</keyword>
<keyword id="KW-0131">Cell cycle</keyword>
<keyword id="KW-0132">Cell division</keyword>
<keyword id="KW-0159">Chromosome partition</keyword>
<keyword id="KW-0963">Cytoplasm</keyword>
<keyword id="KW-0226">DNA condensation</keyword>
<keyword id="KW-1185">Reference proteome</keyword>
<dbReference type="EMBL" id="CP000800">
    <property type="protein sequence ID" value="ABV20061.1"/>
    <property type="molecule type" value="Genomic_DNA"/>
</dbReference>
<dbReference type="RefSeq" id="WP_001288850.1">
    <property type="nucleotide sequence ID" value="NC_009801.1"/>
</dbReference>
<dbReference type="SMR" id="A7ZK12"/>
<dbReference type="GeneID" id="93776493"/>
<dbReference type="KEGG" id="ecw:EcE24377A_1021"/>
<dbReference type="HOGENOM" id="CLU_049853_0_0_6"/>
<dbReference type="Proteomes" id="UP000001122">
    <property type="component" value="Chromosome"/>
</dbReference>
<dbReference type="GO" id="GO:0005737">
    <property type="term" value="C:cytoplasm"/>
    <property type="evidence" value="ECO:0007669"/>
    <property type="project" value="UniProtKB-UniRule"/>
</dbReference>
<dbReference type="GO" id="GO:0009295">
    <property type="term" value="C:nucleoid"/>
    <property type="evidence" value="ECO:0007669"/>
    <property type="project" value="UniProtKB-SubCell"/>
</dbReference>
<dbReference type="GO" id="GO:0005509">
    <property type="term" value="F:calcium ion binding"/>
    <property type="evidence" value="ECO:0007669"/>
    <property type="project" value="UniProtKB-UniRule"/>
</dbReference>
<dbReference type="GO" id="GO:0051301">
    <property type="term" value="P:cell division"/>
    <property type="evidence" value="ECO:0007669"/>
    <property type="project" value="UniProtKB-KW"/>
</dbReference>
<dbReference type="GO" id="GO:0030261">
    <property type="term" value="P:chromosome condensation"/>
    <property type="evidence" value="ECO:0007669"/>
    <property type="project" value="UniProtKB-KW"/>
</dbReference>
<dbReference type="GO" id="GO:0007059">
    <property type="term" value="P:chromosome segregation"/>
    <property type="evidence" value="ECO:0007669"/>
    <property type="project" value="UniProtKB-UniRule"/>
</dbReference>
<dbReference type="GO" id="GO:0006260">
    <property type="term" value="P:DNA replication"/>
    <property type="evidence" value="ECO:0007669"/>
    <property type="project" value="UniProtKB-UniRule"/>
</dbReference>
<dbReference type="CDD" id="cd16337">
    <property type="entry name" value="MukF_C"/>
    <property type="match status" value="1"/>
</dbReference>
<dbReference type="CDD" id="cd16335">
    <property type="entry name" value="MukF_N"/>
    <property type="match status" value="1"/>
</dbReference>
<dbReference type="Gene3D" id="1.20.58.590">
    <property type="entry name" value="Chromosome partition protein MukF, middle domain"/>
    <property type="match status" value="1"/>
</dbReference>
<dbReference type="Gene3D" id="1.10.225.40">
    <property type="entry name" value="MukF, C-terminal domain"/>
    <property type="match status" value="1"/>
</dbReference>
<dbReference type="Gene3D" id="1.10.10.10">
    <property type="entry name" value="Winged helix-like DNA-binding domain superfamily/Winged helix DNA-binding domain"/>
    <property type="match status" value="1"/>
</dbReference>
<dbReference type="HAMAP" id="MF_01803">
    <property type="entry name" value="MukF"/>
    <property type="match status" value="1"/>
</dbReference>
<dbReference type="InterPro" id="IPR005582">
    <property type="entry name" value="Chromosome_partition_MukF"/>
</dbReference>
<dbReference type="InterPro" id="IPR033441">
    <property type="entry name" value="MukF_C"/>
</dbReference>
<dbReference type="InterPro" id="IPR038198">
    <property type="entry name" value="MukF_C_sf"/>
</dbReference>
<dbReference type="InterPro" id="IPR033440">
    <property type="entry name" value="MukF_M"/>
</dbReference>
<dbReference type="InterPro" id="IPR036141">
    <property type="entry name" value="MukF_M_sp"/>
</dbReference>
<dbReference type="InterPro" id="IPR033439">
    <property type="entry name" value="MukF_WHTH"/>
</dbReference>
<dbReference type="InterPro" id="IPR036388">
    <property type="entry name" value="WH-like_DNA-bd_sf"/>
</dbReference>
<dbReference type="InterPro" id="IPR036390">
    <property type="entry name" value="WH_DNA-bd_sf"/>
</dbReference>
<dbReference type="NCBIfam" id="NF003615">
    <property type="entry name" value="PRK05260.1"/>
    <property type="match status" value="1"/>
</dbReference>
<dbReference type="Pfam" id="PF03882">
    <property type="entry name" value="KicB"/>
    <property type="match status" value="1"/>
</dbReference>
<dbReference type="Pfam" id="PF17193">
    <property type="entry name" value="MukF_C"/>
    <property type="match status" value="1"/>
</dbReference>
<dbReference type="Pfam" id="PF17192">
    <property type="entry name" value="MukF_M"/>
    <property type="match status" value="1"/>
</dbReference>
<dbReference type="PIRSF" id="PIRSF018282">
    <property type="entry name" value="MukF"/>
    <property type="match status" value="1"/>
</dbReference>
<dbReference type="SUPFAM" id="SSF140570">
    <property type="entry name" value="MukF C-terminal domain-like"/>
    <property type="match status" value="1"/>
</dbReference>
<dbReference type="SUPFAM" id="SSF46785">
    <property type="entry name" value="Winged helix' DNA-binding domain"/>
    <property type="match status" value="1"/>
</dbReference>
<evidence type="ECO:0000255" key="1">
    <source>
        <dbReference type="HAMAP-Rule" id="MF_01803"/>
    </source>
</evidence>
<comment type="function">
    <text evidence="1">Involved in chromosome condensation, segregation and cell cycle progression. May participate in facilitating chromosome segregation by condensation DNA from both sides of a centrally located replisome during cell division. Not required for mini-F plasmid partitioning. Probably acts via its interaction with MukB and MukE. Overexpression results in anucleate cells. It has a calcium binding activity.</text>
</comment>
<comment type="subunit">
    <text evidence="1">Interacts, and probably forms a ternary complex, with MukE and MukB via its C-terminal region. The complex formation is stimulated by calcium or magnesium. It is required for an interaction between MukE and MukB.</text>
</comment>
<comment type="subcellular location">
    <subcellularLocation>
        <location evidence="1">Cytoplasm</location>
        <location evidence="1">Nucleoid</location>
    </subcellularLocation>
    <text evidence="1">Restricted to the nucleoid region.</text>
</comment>
<comment type="similarity">
    <text evidence="1">Belongs to the MukF family.</text>
</comment>
<gene>
    <name evidence="1" type="primary">mukF</name>
    <name type="ordered locus">EcE24377A_1021</name>
</gene>
<feature type="chain" id="PRO_1000069926" description="Chromosome partition protein MukF">
    <location>
        <begin position="1"/>
        <end position="440"/>
    </location>
</feature>
<feature type="region of interest" description="Leucine-zipper">
    <location>
        <begin position="208"/>
        <end position="236"/>
    </location>
</feature>
<accession>A7ZK12</accession>
<protein>
    <recommendedName>
        <fullName evidence="1">Chromosome partition protein MukF</fullName>
    </recommendedName>
</protein>
<proteinExistence type="inferred from homology"/>
<name>MUKF_ECO24</name>
<organism>
    <name type="scientific">Escherichia coli O139:H28 (strain E24377A / ETEC)</name>
    <dbReference type="NCBI Taxonomy" id="331111"/>
    <lineage>
        <taxon>Bacteria</taxon>
        <taxon>Pseudomonadati</taxon>
        <taxon>Pseudomonadota</taxon>
        <taxon>Gammaproteobacteria</taxon>
        <taxon>Enterobacterales</taxon>
        <taxon>Enterobacteriaceae</taxon>
        <taxon>Escherichia</taxon>
    </lineage>
</organism>
<reference key="1">
    <citation type="journal article" date="2008" name="J. Bacteriol.">
        <title>The pangenome structure of Escherichia coli: comparative genomic analysis of E. coli commensal and pathogenic isolates.</title>
        <authorList>
            <person name="Rasko D.A."/>
            <person name="Rosovitz M.J."/>
            <person name="Myers G.S.A."/>
            <person name="Mongodin E.F."/>
            <person name="Fricke W.F."/>
            <person name="Gajer P."/>
            <person name="Crabtree J."/>
            <person name="Sebaihia M."/>
            <person name="Thomson N.R."/>
            <person name="Chaudhuri R."/>
            <person name="Henderson I.R."/>
            <person name="Sperandio V."/>
            <person name="Ravel J."/>
        </authorList>
    </citation>
    <scope>NUCLEOTIDE SEQUENCE [LARGE SCALE GENOMIC DNA]</scope>
    <source>
        <strain>E24377A / ETEC</strain>
    </source>
</reference>
<sequence>MSEFSQTVPELVAWARKNDFSISLPVDRLSFLLAVATLNGERLDGEMSEGELVDAFRHVSDAFEQTSETIGVRANNAINDMVRQRLLNRFTSEQAEGNAIYRLTPLGIGITDYYIRQREFSTLRLSMQLSIVAGELKRAADAAEEGGDEFHWHRNVYAPLKYSVAEIFDSIDLTQRLMDEQQQQVKDDIAQLLNKDWRAAISSCELLLSETSGTLRELQDTLEAAGDKLQANLLRIQDATMTHDDLHFVDRLVFDLQSKLDRIISWGQQSIDLWIGYDRHVHKFIRTAIDMDKNRVFAQRLRQSVQTYFDEPWALTYANADRLLDMRDEEMALRDEEVTGELPEDLEYEEFNEIREQLAAIIEEQLAVYKTRQVPLDLGLVVREYLSQYPRARHFDVARIVIDQAVRLGVAQADFTGLPAKWQPINDYGAKVQAHVIDKY</sequence>